<reference key="1">
    <citation type="journal article" date="2007" name="J. Bacteriol.">
        <title>The complete genome sequence of Campylobacter jejuni strain 81116 (NCTC11828).</title>
        <authorList>
            <person name="Pearson B.M."/>
            <person name="Gaskin D.J.H."/>
            <person name="Segers R.P.A.M."/>
            <person name="Wells J.M."/>
            <person name="Nuijten P.J.M."/>
            <person name="van Vliet A.H.M."/>
        </authorList>
    </citation>
    <scope>NUCLEOTIDE SEQUENCE [LARGE SCALE GENOMIC DNA]</scope>
    <source>
        <strain>81116 / NCTC 11828</strain>
    </source>
</reference>
<dbReference type="EC" id="2.7.2.3" evidence="1"/>
<dbReference type="EMBL" id="CP000814">
    <property type="protein sequence ID" value="ABV52914.1"/>
    <property type="molecule type" value="Genomic_DNA"/>
</dbReference>
<dbReference type="RefSeq" id="WP_002866688.1">
    <property type="nucleotide sequence ID" value="NC_009839.1"/>
</dbReference>
<dbReference type="SMR" id="A8FN77"/>
<dbReference type="KEGG" id="cju:C8J_1316"/>
<dbReference type="HOGENOM" id="CLU_025427_0_2_7"/>
<dbReference type="UniPathway" id="UPA00109">
    <property type="reaction ID" value="UER00185"/>
</dbReference>
<dbReference type="GO" id="GO:0005829">
    <property type="term" value="C:cytosol"/>
    <property type="evidence" value="ECO:0007669"/>
    <property type="project" value="TreeGrafter"/>
</dbReference>
<dbReference type="GO" id="GO:0043531">
    <property type="term" value="F:ADP binding"/>
    <property type="evidence" value="ECO:0007669"/>
    <property type="project" value="TreeGrafter"/>
</dbReference>
<dbReference type="GO" id="GO:0005524">
    <property type="term" value="F:ATP binding"/>
    <property type="evidence" value="ECO:0007669"/>
    <property type="project" value="UniProtKB-KW"/>
</dbReference>
<dbReference type="GO" id="GO:0004618">
    <property type="term" value="F:phosphoglycerate kinase activity"/>
    <property type="evidence" value="ECO:0007669"/>
    <property type="project" value="UniProtKB-UniRule"/>
</dbReference>
<dbReference type="GO" id="GO:0006094">
    <property type="term" value="P:gluconeogenesis"/>
    <property type="evidence" value="ECO:0007669"/>
    <property type="project" value="TreeGrafter"/>
</dbReference>
<dbReference type="GO" id="GO:0006096">
    <property type="term" value="P:glycolytic process"/>
    <property type="evidence" value="ECO:0007669"/>
    <property type="project" value="UniProtKB-UniRule"/>
</dbReference>
<dbReference type="CDD" id="cd00318">
    <property type="entry name" value="Phosphoglycerate_kinase"/>
    <property type="match status" value="1"/>
</dbReference>
<dbReference type="FunFam" id="3.40.50.1260:FF:000003">
    <property type="entry name" value="Phosphoglycerate kinase"/>
    <property type="match status" value="1"/>
</dbReference>
<dbReference type="FunFam" id="3.40.50.1260:FF:000006">
    <property type="entry name" value="Phosphoglycerate kinase"/>
    <property type="match status" value="1"/>
</dbReference>
<dbReference type="Gene3D" id="3.40.50.1260">
    <property type="entry name" value="Phosphoglycerate kinase, N-terminal domain"/>
    <property type="match status" value="2"/>
</dbReference>
<dbReference type="HAMAP" id="MF_00145">
    <property type="entry name" value="Phosphoglyc_kinase"/>
    <property type="match status" value="1"/>
</dbReference>
<dbReference type="InterPro" id="IPR001576">
    <property type="entry name" value="Phosphoglycerate_kinase"/>
</dbReference>
<dbReference type="InterPro" id="IPR015911">
    <property type="entry name" value="Phosphoglycerate_kinase_CS"/>
</dbReference>
<dbReference type="InterPro" id="IPR015824">
    <property type="entry name" value="Phosphoglycerate_kinase_N"/>
</dbReference>
<dbReference type="InterPro" id="IPR036043">
    <property type="entry name" value="Phosphoglycerate_kinase_sf"/>
</dbReference>
<dbReference type="PANTHER" id="PTHR11406">
    <property type="entry name" value="PHOSPHOGLYCERATE KINASE"/>
    <property type="match status" value="1"/>
</dbReference>
<dbReference type="PANTHER" id="PTHR11406:SF23">
    <property type="entry name" value="PHOSPHOGLYCERATE KINASE 1, CHLOROPLASTIC-RELATED"/>
    <property type="match status" value="1"/>
</dbReference>
<dbReference type="Pfam" id="PF00162">
    <property type="entry name" value="PGK"/>
    <property type="match status" value="1"/>
</dbReference>
<dbReference type="PIRSF" id="PIRSF000724">
    <property type="entry name" value="Pgk"/>
    <property type="match status" value="1"/>
</dbReference>
<dbReference type="PRINTS" id="PR00477">
    <property type="entry name" value="PHGLYCKINASE"/>
</dbReference>
<dbReference type="SUPFAM" id="SSF53748">
    <property type="entry name" value="Phosphoglycerate kinase"/>
    <property type="match status" value="1"/>
</dbReference>
<dbReference type="PROSITE" id="PS00111">
    <property type="entry name" value="PGLYCERATE_KINASE"/>
    <property type="match status" value="1"/>
</dbReference>
<protein>
    <recommendedName>
        <fullName evidence="1">Phosphoglycerate kinase</fullName>
        <ecNumber evidence="1">2.7.2.3</ecNumber>
    </recommendedName>
</protein>
<evidence type="ECO:0000255" key="1">
    <source>
        <dbReference type="HAMAP-Rule" id="MF_00145"/>
    </source>
</evidence>
<keyword id="KW-0067">ATP-binding</keyword>
<keyword id="KW-0963">Cytoplasm</keyword>
<keyword id="KW-0324">Glycolysis</keyword>
<keyword id="KW-0418">Kinase</keyword>
<keyword id="KW-0547">Nucleotide-binding</keyword>
<keyword id="KW-0808">Transferase</keyword>
<organism>
    <name type="scientific">Campylobacter jejuni subsp. jejuni serotype O:6 (strain 81116 / NCTC 11828)</name>
    <dbReference type="NCBI Taxonomy" id="407148"/>
    <lineage>
        <taxon>Bacteria</taxon>
        <taxon>Pseudomonadati</taxon>
        <taxon>Campylobacterota</taxon>
        <taxon>Epsilonproteobacteria</taxon>
        <taxon>Campylobacterales</taxon>
        <taxon>Campylobacteraceae</taxon>
        <taxon>Campylobacter</taxon>
    </lineage>
</organism>
<gene>
    <name evidence="1" type="primary">pgk</name>
    <name type="ordered locus">C8J_1316</name>
</gene>
<feature type="chain" id="PRO_1000203325" description="Phosphoglycerate kinase">
    <location>
        <begin position="1"/>
        <end position="400"/>
    </location>
</feature>
<feature type="binding site" evidence="1">
    <location>
        <begin position="22"/>
        <end position="24"/>
    </location>
    <ligand>
        <name>substrate</name>
    </ligand>
</feature>
<feature type="binding site" evidence="1">
    <location>
        <position position="38"/>
    </location>
    <ligand>
        <name>substrate</name>
    </ligand>
</feature>
<feature type="binding site" evidence="1">
    <location>
        <begin position="61"/>
        <end position="64"/>
    </location>
    <ligand>
        <name>substrate</name>
    </ligand>
</feature>
<feature type="binding site" evidence="1">
    <location>
        <position position="119"/>
    </location>
    <ligand>
        <name>substrate</name>
    </ligand>
</feature>
<feature type="binding site" evidence="1">
    <location>
        <position position="152"/>
    </location>
    <ligand>
        <name>substrate</name>
    </ligand>
</feature>
<feature type="binding site" evidence="1">
    <location>
        <position position="205"/>
    </location>
    <ligand>
        <name>ATP</name>
        <dbReference type="ChEBI" id="CHEBI:30616"/>
    </ligand>
</feature>
<feature type="binding site" evidence="1">
    <location>
        <position position="296"/>
    </location>
    <ligand>
        <name>ATP</name>
        <dbReference type="ChEBI" id="CHEBI:30616"/>
    </ligand>
</feature>
<feature type="binding site" evidence="1">
    <location>
        <position position="327"/>
    </location>
    <ligand>
        <name>ATP</name>
        <dbReference type="ChEBI" id="CHEBI:30616"/>
    </ligand>
</feature>
<feature type="binding site" evidence="1">
    <location>
        <begin position="353"/>
        <end position="356"/>
    </location>
    <ligand>
        <name>ATP</name>
        <dbReference type="ChEBI" id="CHEBI:30616"/>
    </ligand>
</feature>
<name>PGK_CAMJ8</name>
<comment type="catalytic activity">
    <reaction evidence="1">
        <text>(2R)-3-phosphoglycerate + ATP = (2R)-3-phospho-glyceroyl phosphate + ADP</text>
        <dbReference type="Rhea" id="RHEA:14801"/>
        <dbReference type="ChEBI" id="CHEBI:30616"/>
        <dbReference type="ChEBI" id="CHEBI:57604"/>
        <dbReference type="ChEBI" id="CHEBI:58272"/>
        <dbReference type="ChEBI" id="CHEBI:456216"/>
        <dbReference type="EC" id="2.7.2.3"/>
    </reaction>
</comment>
<comment type="pathway">
    <text evidence="1">Carbohydrate degradation; glycolysis; pyruvate from D-glyceraldehyde 3-phosphate: step 2/5.</text>
</comment>
<comment type="subunit">
    <text evidence="1">Monomer.</text>
</comment>
<comment type="subcellular location">
    <subcellularLocation>
        <location evidence="1">Cytoplasm</location>
    </subcellularLocation>
</comment>
<comment type="similarity">
    <text evidence="1">Belongs to the phosphoglycerate kinase family.</text>
</comment>
<sequence length="400" mass="43605">MSDIISIKDIDLAKKKVFIRCDFNVPQDDFLNITDDRRIRSAIPTIRYCLDNGCSVILASHLGRPKEISSKYSLEPVAKRLARLLDKEIIMAKDVIGEDAKTKAMNLKAGEILLLENLRFEKGETKNDENLAKELASMVQVYINDAFGVCHRAHSSVEAITKFFDEKHKGAGFLLQKEIDFASNLIKHPARPFVAVVGGSKVSGKLQALTNLLPKVDKLIIGGGMAFTFLKALGYDIGNSLLEEELLEEANKILTKGKNLGVKIYLPVDVVAAPACSQDAPMKFVPVQEIPNGWMGLDIGPASVRLFKEVISDAQTIWWNGPMGVFEIDKFSKGSIKMSHYISEGHATSVVGGGDTADVVARAGDADEMTFISTGGGASLELIEGKELPGVKALRSKENE</sequence>
<accession>A8FN77</accession>
<proteinExistence type="inferred from homology"/>